<sequence>MKKNTDSEMDQRLGYKFLVPDPKAGVFYRPLHFQYVSYSNFILHRLHGILTVKRPLLSFKNNTERIMIEISNVKVTPPDYSPIIASIKGKSYDALATFTVNIFKEVMAKEGISITKISSYEGKDSHLIKIPLLIGYGNKNPLDTAKYLVPNVIGGVFINKQSVEKVGINLVEKITTWPKFRVVKPNSFTFSFSSVSPPNILPTRYRHYKISLDISQLEASNISSTKTFITVNIVLLSQYLSRVSLGFIRRSLSYDMPPEVVYLVNAIIDSAKRLTESITDFNIDTYINDLVEAEHVKQKSQLTINEFKYEMLHNFLPHMNYTPDQLKGFYMISLLRKFLYCIYYTSRYPDRDSMVCHRILTYGKYFETLAHDELENYIGNIRNDIMNNHKNRGTYAVNIHVLTTPGLNHAFSSLLSGKFKKSDGSYRTHPHYSWMQNISIPRSVGFYPDQVKISKMFSVRKYHPSQYLYFCSSDVPERGPQVGLVSQLSVLSSITNILTSEYLDLEKKICEYIRSYYKDDISYFETGFPITIENALVASLNPNMICDFVTDFRRRKRMGFFGNLEVGITLVRDHMNEIRINIGAGRLVRPFLVVDNGELMMDVCPELESRLDDMTFSDIQKEFPHVIEMVDIEQFTFSNVCESVQKFRMMSKDERKQYDLCDFPAEFRDGYVASSLVGINHNSGPRAILGCAQAKQAISCLSSDIRNKIDNGIHLMYPERPIVISKALETSKIAANCFGQHVTIALMSYKGINQEDGIIIKKQFIQRGGLDIVTAKKHQVEIPLENFNNKERDRSNAYSKLESNGLVRLNAFLESGDAMARNISSRTLEDDFARDNQISFDVSEKYTDMYKSRVERVQVELTDKVKVRVLTMKERRPILGDKFTTRTSQKGTVAYIADETELPYDENGITPDVIINSTSIFSRKTISMLIEVILTAAYSAKPYNNKGENRPVCFPSSNETSIDTYMQFAKQCYEHLNPKLTEKELSDKIFCEKILYDPETDKPYASKVFFGPIYYLRLRHLTQDKATVRCRGKKTKLIRQANEGRKRGGGIKFGEMERDCLIAHGAANTITEVLKDSEEDYQDVYICENCGDIAAQIKSINTCLRCSKLNLSPLLTKIDTTHVSKVFLTQMNARGVKVKLDFERRPPSFYKPLDKVDLKPSFLK</sequence>
<evidence type="ECO:0000250" key="1">
    <source>
        <dbReference type="UniProtKB" id="Q76ZP7"/>
    </source>
</evidence>
<evidence type="ECO:0000305" key="2"/>
<reference key="1">
    <citation type="journal article" date="1993" name="FEBS Lett.">
        <title>Genes of variola and vaccinia viruses necessary to overcome the host protective mechanisms.</title>
        <authorList>
            <person name="Shchelkunov S.N."/>
            <person name="Blinov V.M."/>
            <person name="Sandakhchiev L.S."/>
        </authorList>
    </citation>
    <scope>NUCLEOTIDE SEQUENCE [LARGE SCALE GENOMIC DNA]</scope>
</reference>
<comment type="function">
    <text evidence="1">Part of the DNA-dependent RNA polymerase which catalyzes the transcription of viral DNA into RNA using the four ribonucleoside triphosphates as substrates. Responsible for the transcription of early, intermediate and late genes. DNA-dependent RNA polymerase associates with the early transcription factor (ETF), itself composed of OPG118 and OPG133, thereby allowing the early genes transcription. Late transcription, and probably also intermediate transcription, require newly synthesized RNA polymerase.</text>
</comment>
<comment type="catalytic activity">
    <reaction evidence="1">
        <text>RNA(n) + a ribonucleoside 5'-triphosphate = RNA(n+1) + diphosphate</text>
        <dbReference type="Rhea" id="RHEA:21248"/>
        <dbReference type="Rhea" id="RHEA-COMP:14527"/>
        <dbReference type="Rhea" id="RHEA-COMP:17342"/>
        <dbReference type="ChEBI" id="CHEBI:33019"/>
        <dbReference type="ChEBI" id="CHEBI:61557"/>
        <dbReference type="ChEBI" id="CHEBI:140395"/>
        <dbReference type="EC" id="2.7.7.6"/>
    </reaction>
</comment>
<comment type="subunit">
    <text evidence="1">The DNA-dependent RNA polymerase used for intermediate and late genes expression consists of eight subunits 147 kDa, 133 kDa, 35 kDa, 30 kDa, 22 kDa, 19 kDa, 18 kDa and 7 kDa totalling more than 500 kDa in mass. The same holoenzyme, with the addition of the transcription-specificity factor RAP94, is used for early gene expression.</text>
</comment>
<comment type="subcellular location">
    <subcellularLocation>
        <location evidence="1">Virion</location>
    </subcellularLocation>
    <text evidence="1">All the enzymes and other proteins required to synthesize early mRNAs are packaged within the virion core along with the DNA genome. This is necessary because viral early mRNAs are synthesized within minutes after virus entry into the cell and are extruded through pores in the core particle.</text>
</comment>
<comment type="similarity">
    <text evidence="2">Belongs to the RNA polymerase beta chain family.</text>
</comment>
<name>RP132_VAR67</name>
<accession>P0DST3</accession>
<accession>P33811</accession>
<accession>Q76PX7</accession>
<accession>Q90027</accession>
<accession>Q90031</accession>
<organismHost>
    <name type="scientific">Homo sapiens</name>
    <name type="common">Human</name>
    <dbReference type="NCBI Taxonomy" id="9606"/>
</organismHost>
<gene>
    <name type="primary">OPG151</name>
    <name type="synonym">RPO132</name>
    <name type="ORF">A24R</name>
    <name type="ORF">A25R</name>
</gene>
<organism>
    <name type="scientific">Variola virus (isolate Human/India/Ind3/1967)</name>
    <name type="common">VARV</name>
    <name type="synonym">Smallpox virus</name>
    <dbReference type="NCBI Taxonomy" id="587200"/>
    <lineage>
        <taxon>Viruses</taxon>
        <taxon>Varidnaviria</taxon>
        <taxon>Bamfordvirae</taxon>
        <taxon>Nucleocytoviricota</taxon>
        <taxon>Pokkesviricetes</taxon>
        <taxon>Chitovirales</taxon>
        <taxon>Poxviridae</taxon>
        <taxon>Chordopoxvirinae</taxon>
        <taxon>Orthopoxvirus</taxon>
        <taxon>Variola virus</taxon>
    </lineage>
</organism>
<feature type="chain" id="PRO_0000048062" description="DNA-directed RNA polymerase 133 kDa polypeptide">
    <location>
        <begin position="1"/>
        <end position="1164"/>
    </location>
</feature>
<dbReference type="EC" id="2.7.7.6"/>
<dbReference type="EMBL" id="X69198">
    <property type="protein sequence ID" value="CAA49069.1"/>
    <property type="molecule type" value="Genomic_DNA"/>
</dbReference>
<dbReference type="PIR" id="G36850">
    <property type="entry name" value="G36850"/>
</dbReference>
<dbReference type="RefSeq" id="NP_042172.1">
    <property type="nucleotide sequence ID" value="NC_001611.1"/>
</dbReference>
<dbReference type="SMR" id="P0DST3"/>
<dbReference type="GeneID" id="1486500"/>
<dbReference type="KEGG" id="vg:1486500"/>
<dbReference type="Proteomes" id="UP000002060">
    <property type="component" value="Segment"/>
</dbReference>
<dbReference type="GO" id="GO:0000428">
    <property type="term" value="C:DNA-directed RNA polymerase complex"/>
    <property type="evidence" value="ECO:0007669"/>
    <property type="project" value="UniProtKB-KW"/>
</dbReference>
<dbReference type="GO" id="GO:0044423">
    <property type="term" value="C:virion component"/>
    <property type="evidence" value="ECO:0007669"/>
    <property type="project" value="UniProtKB-KW"/>
</dbReference>
<dbReference type="GO" id="GO:0003677">
    <property type="term" value="F:DNA binding"/>
    <property type="evidence" value="ECO:0007669"/>
    <property type="project" value="InterPro"/>
</dbReference>
<dbReference type="GO" id="GO:0003899">
    <property type="term" value="F:DNA-directed RNA polymerase activity"/>
    <property type="evidence" value="ECO:0007669"/>
    <property type="project" value="UniProtKB-EC"/>
</dbReference>
<dbReference type="GO" id="GO:0046872">
    <property type="term" value="F:metal ion binding"/>
    <property type="evidence" value="ECO:0007669"/>
    <property type="project" value="UniProtKB-KW"/>
</dbReference>
<dbReference type="GO" id="GO:0032549">
    <property type="term" value="F:ribonucleoside binding"/>
    <property type="evidence" value="ECO:0007669"/>
    <property type="project" value="InterPro"/>
</dbReference>
<dbReference type="GO" id="GO:0006351">
    <property type="term" value="P:DNA-templated transcription"/>
    <property type="evidence" value="ECO:0007669"/>
    <property type="project" value="InterPro"/>
</dbReference>
<dbReference type="Gene3D" id="2.40.50.150">
    <property type="match status" value="1"/>
</dbReference>
<dbReference type="Gene3D" id="3.90.1100.10">
    <property type="match status" value="1"/>
</dbReference>
<dbReference type="Gene3D" id="2.40.270.10">
    <property type="entry name" value="DNA-directed RNA polymerase, subunit 2, domain 6"/>
    <property type="match status" value="1"/>
</dbReference>
<dbReference type="Gene3D" id="3.90.1800.10">
    <property type="entry name" value="RNA polymerase alpha subunit dimerisation domain"/>
    <property type="match status" value="1"/>
</dbReference>
<dbReference type="InterPro" id="IPR015712">
    <property type="entry name" value="DNA-dir_RNA_pol_su2"/>
</dbReference>
<dbReference type="InterPro" id="IPR007120">
    <property type="entry name" value="DNA-dir_RNAP_su2_dom"/>
</dbReference>
<dbReference type="InterPro" id="IPR037033">
    <property type="entry name" value="DNA-dir_RNAP_su2_hyb_sf"/>
</dbReference>
<dbReference type="InterPro" id="IPR024390">
    <property type="entry name" value="RNA_pol_132_poxvirus"/>
</dbReference>
<dbReference type="InterPro" id="IPR007121">
    <property type="entry name" value="RNA_pol_bsu_CS"/>
</dbReference>
<dbReference type="InterPro" id="IPR007645">
    <property type="entry name" value="RNA_pol_Rpb2_3"/>
</dbReference>
<dbReference type="InterPro" id="IPR007647">
    <property type="entry name" value="RNA_pol_Rpb2_5"/>
</dbReference>
<dbReference type="InterPro" id="IPR007641">
    <property type="entry name" value="RNA_pol_Rpb2_7"/>
</dbReference>
<dbReference type="InterPro" id="IPR014724">
    <property type="entry name" value="RNA_pol_RPB2_OB-fold"/>
</dbReference>
<dbReference type="PANTHER" id="PTHR20856">
    <property type="entry name" value="DNA-DIRECTED RNA POLYMERASE I SUBUNIT 2"/>
    <property type="match status" value="1"/>
</dbReference>
<dbReference type="Pfam" id="PF04565">
    <property type="entry name" value="RNA_pol_Rpb2_3"/>
    <property type="match status" value="1"/>
</dbReference>
<dbReference type="Pfam" id="PF04567">
    <property type="entry name" value="RNA_pol_Rpb2_5"/>
    <property type="match status" value="1"/>
</dbReference>
<dbReference type="Pfam" id="PF00562">
    <property type="entry name" value="RNA_pol_Rpb2_6"/>
    <property type="match status" value="1"/>
</dbReference>
<dbReference type="Pfam" id="PF04560">
    <property type="entry name" value="RNA_pol_Rpb2_7"/>
    <property type="match status" value="1"/>
</dbReference>
<dbReference type="Pfam" id="PF12415">
    <property type="entry name" value="rpo132"/>
    <property type="match status" value="1"/>
</dbReference>
<dbReference type="SUPFAM" id="SSF64484">
    <property type="entry name" value="beta and beta-prime subunits of DNA dependent RNA-polymerase"/>
    <property type="match status" value="1"/>
</dbReference>
<dbReference type="PROSITE" id="PS01166">
    <property type="entry name" value="RNA_POL_BETA"/>
    <property type="match status" value="1"/>
</dbReference>
<protein>
    <recommendedName>
        <fullName>DNA-directed RNA polymerase 133 kDa polypeptide</fullName>
        <ecNumber>2.7.7.6</ecNumber>
    </recommendedName>
</protein>
<keyword id="KW-0240">DNA-directed RNA polymerase</keyword>
<keyword id="KW-0479">Metal-binding</keyword>
<keyword id="KW-0548">Nucleotidyltransferase</keyword>
<keyword id="KW-0597">Phosphoprotein</keyword>
<keyword id="KW-1185">Reference proteome</keyword>
<keyword id="KW-0804">Transcription</keyword>
<keyword id="KW-0808">Transferase</keyword>
<keyword id="KW-0946">Virion</keyword>
<proteinExistence type="inferred from homology"/>